<organism>
    <name type="scientific">Bacillus cereus (strain ZK / E33L)</name>
    <dbReference type="NCBI Taxonomy" id="288681"/>
    <lineage>
        <taxon>Bacteria</taxon>
        <taxon>Bacillati</taxon>
        <taxon>Bacillota</taxon>
        <taxon>Bacilli</taxon>
        <taxon>Bacillales</taxon>
        <taxon>Bacillaceae</taxon>
        <taxon>Bacillus</taxon>
        <taxon>Bacillus cereus group</taxon>
    </lineage>
</organism>
<dbReference type="EMBL" id="CP000001">
    <property type="protein sequence ID" value="AAU15275.1"/>
    <property type="molecule type" value="Genomic_DNA"/>
</dbReference>
<dbReference type="RefSeq" id="WP_000847211.1">
    <property type="nucleotide sequence ID" value="NZ_CP009968.1"/>
</dbReference>
<dbReference type="SMR" id="Q630U4"/>
<dbReference type="GeneID" id="93005819"/>
<dbReference type="KEGG" id="bcz:BCE33L5004"/>
<dbReference type="PATRIC" id="fig|288681.22.peg.342"/>
<dbReference type="Proteomes" id="UP000002612">
    <property type="component" value="Chromosome"/>
</dbReference>
<dbReference type="GO" id="GO:0005886">
    <property type="term" value="C:plasma membrane"/>
    <property type="evidence" value="ECO:0007669"/>
    <property type="project" value="UniProtKB-SubCell"/>
</dbReference>
<dbReference type="GO" id="GO:0045259">
    <property type="term" value="C:proton-transporting ATP synthase complex"/>
    <property type="evidence" value="ECO:0007669"/>
    <property type="project" value="UniProtKB-KW"/>
</dbReference>
<dbReference type="GO" id="GO:0005524">
    <property type="term" value="F:ATP binding"/>
    <property type="evidence" value="ECO:0007669"/>
    <property type="project" value="UniProtKB-UniRule"/>
</dbReference>
<dbReference type="GO" id="GO:0046933">
    <property type="term" value="F:proton-transporting ATP synthase activity, rotational mechanism"/>
    <property type="evidence" value="ECO:0007669"/>
    <property type="project" value="UniProtKB-UniRule"/>
</dbReference>
<dbReference type="CDD" id="cd12152">
    <property type="entry name" value="F1-ATPase_delta"/>
    <property type="match status" value="1"/>
</dbReference>
<dbReference type="FunFam" id="1.20.5.440:FF:000001">
    <property type="entry name" value="ATP synthase epsilon chain"/>
    <property type="match status" value="1"/>
</dbReference>
<dbReference type="FunFam" id="2.60.15.10:FF:000001">
    <property type="entry name" value="ATP synthase epsilon chain"/>
    <property type="match status" value="1"/>
</dbReference>
<dbReference type="Gene3D" id="1.20.5.440">
    <property type="entry name" value="ATP synthase delta/epsilon subunit, C-terminal domain"/>
    <property type="match status" value="1"/>
</dbReference>
<dbReference type="Gene3D" id="2.60.15.10">
    <property type="entry name" value="F0F1 ATP synthase delta/epsilon subunit, N-terminal"/>
    <property type="match status" value="1"/>
</dbReference>
<dbReference type="HAMAP" id="MF_00530">
    <property type="entry name" value="ATP_synth_epsil_bac"/>
    <property type="match status" value="1"/>
</dbReference>
<dbReference type="InterPro" id="IPR036794">
    <property type="entry name" value="ATP_F1_dsu/esu_C_sf"/>
</dbReference>
<dbReference type="InterPro" id="IPR001469">
    <property type="entry name" value="ATP_synth_F1_dsu/esu"/>
</dbReference>
<dbReference type="InterPro" id="IPR020546">
    <property type="entry name" value="ATP_synth_F1_dsu/esu_N"/>
</dbReference>
<dbReference type="InterPro" id="IPR020547">
    <property type="entry name" value="ATP_synth_F1_esu_C"/>
</dbReference>
<dbReference type="InterPro" id="IPR036771">
    <property type="entry name" value="ATPsynth_dsu/esu_N"/>
</dbReference>
<dbReference type="NCBIfam" id="TIGR01216">
    <property type="entry name" value="ATP_synt_epsi"/>
    <property type="match status" value="1"/>
</dbReference>
<dbReference type="NCBIfam" id="NF001846">
    <property type="entry name" value="PRK00571.1-3"/>
    <property type="match status" value="1"/>
</dbReference>
<dbReference type="NCBIfam" id="NF009980">
    <property type="entry name" value="PRK13446.1"/>
    <property type="match status" value="1"/>
</dbReference>
<dbReference type="PANTHER" id="PTHR13822">
    <property type="entry name" value="ATP SYNTHASE DELTA/EPSILON CHAIN"/>
    <property type="match status" value="1"/>
</dbReference>
<dbReference type="PANTHER" id="PTHR13822:SF10">
    <property type="entry name" value="ATP SYNTHASE EPSILON CHAIN, CHLOROPLASTIC"/>
    <property type="match status" value="1"/>
</dbReference>
<dbReference type="Pfam" id="PF00401">
    <property type="entry name" value="ATP-synt_DE"/>
    <property type="match status" value="1"/>
</dbReference>
<dbReference type="Pfam" id="PF02823">
    <property type="entry name" value="ATP-synt_DE_N"/>
    <property type="match status" value="1"/>
</dbReference>
<dbReference type="SUPFAM" id="SSF46604">
    <property type="entry name" value="Epsilon subunit of F1F0-ATP synthase C-terminal domain"/>
    <property type="match status" value="1"/>
</dbReference>
<dbReference type="SUPFAM" id="SSF51344">
    <property type="entry name" value="Epsilon subunit of F1F0-ATP synthase N-terminal domain"/>
    <property type="match status" value="1"/>
</dbReference>
<name>ATPE_BACCZ</name>
<evidence type="ECO:0000255" key="1">
    <source>
        <dbReference type="HAMAP-Rule" id="MF_00530"/>
    </source>
</evidence>
<sequence>MKTFPVSIVTPDGPVYEKEVEMVSVKAESGEMGILPGHIPTVAPLKISAVRLKNGGHTDYVAVSGGFIEVRPDKVTVLSSSAEEANHIDIHRANEAKRRAEQRLQDKQAHVDFKRAEMALQRAVNRLNVSDMK</sequence>
<accession>Q630U4</accession>
<feature type="chain" id="PRO_0000188093" description="ATP synthase epsilon chain">
    <location>
        <begin position="1"/>
        <end position="133"/>
    </location>
</feature>
<gene>
    <name evidence="1" type="primary">atpC</name>
    <name type="ordered locus">BCE33L5004</name>
</gene>
<protein>
    <recommendedName>
        <fullName evidence="1">ATP synthase epsilon chain</fullName>
    </recommendedName>
    <alternativeName>
        <fullName evidence="1">ATP synthase F1 sector epsilon subunit</fullName>
    </alternativeName>
    <alternativeName>
        <fullName evidence="1">F-ATPase epsilon subunit</fullName>
    </alternativeName>
</protein>
<comment type="function">
    <text evidence="1">Produces ATP from ADP in the presence of a proton gradient across the membrane.</text>
</comment>
<comment type="subunit">
    <text>F-type ATPases have 2 components, CF(1) - the catalytic core - and CF(0) - the membrane proton channel. CF(1) has five subunits: alpha(3), beta(3), gamma(1), delta(1), epsilon(1). CF(0) has three main subunits: a, b and c.</text>
</comment>
<comment type="subcellular location">
    <subcellularLocation>
        <location evidence="1">Cell membrane</location>
        <topology evidence="1">Peripheral membrane protein</topology>
    </subcellularLocation>
</comment>
<comment type="similarity">
    <text evidence="1">Belongs to the ATPase epsilon chain family.</text>
</comment>
<keyword id="KW-0066">ATP synthesis</keyword>
<keyword id="KW-1003">Cell membrane</keyword>
<keyword id="KW-0139">CF(1)</keyword>
<keyword id="KW-0375">Hydrogen ion transport</keyword>
<keyword id="KW-0406">Ion transport</keyword>
<keyword id="KW-0472">Membrane</keyword>
<keyword id="KW-0813">Transport</keyword>
<proteinExistence type="inferred from homology"/>
<reference key="1">
    <citation type="journal article" date="2006" name="J. Bacteriol.">
        <title>Pathogenomic sequence analysis of Bacillus cereus and Bacillus thuringiensis isolates closely related to Bacillus anthracis.</title>
        <authorList>
            <person name="Han C.S."/>
            <person name="Xie G."/>
            <person name="Challacombe J.F."/>
            <person name="Altherr M.R."/>
            <person name="Bhotika S.S."/>
            <person name="Bruce D."/>
            <person name="Campbell C.S."/>
            <person name="Campbell M.L."/>
            <person name="Chen J."/>
            <person name="Chertkov O."/>
            <person name="Cleland C."/>
            <person name="Dimitrijevic M."/>
            <person name="Doggett N.A."/>
            <person name="Fawcett J.J."/>
            <person name="Glavina T."/>
            <person name="Goodwin L.A."/>
            <person name="Hill K.K."/>
            <person name="Hitchcock P."/>
            <person name="Jackson P.J."/>
            <person name="Keim P."/>
            <person name="Kewalramani A.R."/>
            <person name="Longmire J."/>
            <person name="Lucas S."/>
            <person name="Malfatti S."/>
            <person name="McMurry K."/>
            <person name="Meincke L.J."/>
            <person name="Misra M."/>
            <person name="Moseman B.L."/>
            <person name="Mundt M."/>
            <person name="Munk A.C."/>
            <person name="Okinaka R.T."/>
            <person name="Parson-Quintana B."/>
            <person name="Reilly L.P."/>
            <person name="Richardson P."/>
            <person name="Robinson D.L."/>
            <person name="Rubin E."/>
            <person name="Saunders E."/>
            <person name="Tapia R."/>
            <person name="Tesmer J.G."/>
            <person name="Thayer N."/>
            <person name="Thompson L.S."/>
            <person name="Tice H."/>
            <person name="Ticknor L.O."/>
            <person name="Wills P.L."/>
            <person name="Brettin T.S."/>
            <person name="Gilna P."/>
        </authorList>
    </citation>
    <scope>NUCLEOTIDE SEQUENCE [LARGE SCALE GENOMIC DNA]</scope>
    <source>
        <strain>ZK / E33L</strain>
    </source>
</reference>